<proteinExistence type="inferred from homology"/>
<sequence>MFCIQCEQTIRTPAGNGCSYSQGMCGKLAATSDLQDLLIYMLQGVSVYAVKARELGIIDAEIDSFVPKAFFSTLTNVNFDDERIMAYAQQAAKYRTQLKASYEAACEQAGIVAEQVPQVAQLVLGTSKIEMLAQAPIALLNKDKHNVHEDIMGLRLLCLYGLKGAAAYMEHARVLGQTDADVAGSFHEIMSFLGEPSVDGDKLFTTAMDIGQLNYRIMAMLDAGETQAFGHPEPTVVNTKSVKGKAILVSGHDMKDLELILEQTVGKGINVFTHGEMLPALAYPAFKKYPHLVGNYGSAWQNQQQEFANFPGAVVMTSNCIIDPNVGSYSDRIFTRSIVGWPGVVHIEGDDFSAVIDKALALEGFIYDEIPHTITIGFARNALMAAAPAVVENVKSGAIKHFFLVGGCDGDKADRSYFTELAKSTPKDSLILTLGCGKYKFNKLEFGDINGIPRLLDVGQCNDAYSAIQLAIALAEVFECDINELPLSLVLSWFEQKAIVVLLTLLSLGVKNIRTGPTPPAFLTANLAKILEEKFGLRNTTTVEADLKTMLNVA</sequence>
<comment type="function">
    <text evidence="1">Catalyzes the reduction of hydroxylamine to form NH(3) and H(2)O.</text>
</comment>
<comment type="catalytic activity">
    <reaction evidence="1">
        <text>A + NH4(+) + H2O = hydroxylamine + AH2 + H(+)</text>
        <dbReference type="Rhea" id="RHEA:22052"/>
        <dbReference type="ChEBI" id="CHEBI:13193"/>
        <dbReference type="ChEBI" id="CHEBI:15377"/>
        <dbReference type="ChEBI" id="CHEBI:15378"/>
        <dbReference type="ChEBI" id="CHEBI:15429"/>
        <dbReference type="ChEBI" id="CHEBI:17499"/>
        <dbReference type="ChEBI" id="CHEBI:28938"/>
        <dbReference type="EC" id="1.7.99.1"/>
    </reaction>
</comment>
<comment type="cofactor">
    <cofactor evidence="1">
        <name>[2Fe-2S] cluster</name>
        <dbReference type="ChEBI" id="CHEBI:190135"/>
    </cofactor>
    <text evidence="1">Binds 1 [2Fe-2S] cluster.</text>
</comment>
<comment type="cofactor">
    <cofactor evidence="1">
        <name>hybrid [4Fe-2O-2S] cluster</name>
        <dbReference type="ChEBI" id="CHEBI:60519"/>
    </cofactor>
    <text evidence="1">Binds 1 hybrid [4Fe-2O-2S] cluster.</text>
</comment>
<comment type="subcellular location">
    <subcellularLocation>
        <location evidence="1">Cytoplasm</location>
    </subcellularLocation>
</comment>
<comment type="similarity">
    <text evidence="1">Belongs to the HCP family.</text>
</comment>
<gene>
    <name evidence="1" type="primary">hcp</name>
    <name type="ordered locus">Sbal223_3097</name>
</gene>
<name>HCP_SHEB2</name>
<protein>
    <recommendedName>
        <fullName evidence="1">Hydroxylamine reductase</fullName>
        <ecNumber evidence="1">1.7.99.1</ecNumber>
    </recommendedName>
    <alternativeName>
        <fullName evidence="1">Hybrid-cluster protein</fullName>
        <shortName evidence="1">HCP</shortName>
    </alternativeName>
    <alternativeName>
        <fullName evidence="1">Prismane protein</fullName>
    </alternativeName>
</protein>
<keyword id="KW-0001">2Fe-2S</keyword>
<keyword id="KW-0963">Cytoplasm</keyword>
<keyword id="KW-0408">Iron</keyword>
<keyword id="KW-0411">Iron-sulfur</keyword>
<keyword id="KW-0479">Metal-binding</keyword>
<keyword id="KW-0560">Oxidoreductase</keyword>
<accession>B8EBN7</accession>
<dbReference type="EC" id="1.7.99.1" evidence="1"/>
<dbReference type="EMBL" id="CP001252">
    <property type="protein sequence ID" value="ACK47582.1"/>
    <property type="molecule type" value="Genomic_DNA"/>
</dbReference>
<dbReference type="RefSeq" id="WP_006080794.1">
    <property type="nucleotide sequence ID" value="NC_011663.1"/>
</dbReference>
<dbReference type="SMR" id="B8EBN7"/>
<dbReference type="KEGG" id="sbp:Sbal223_3097"/>
<dbReference type="HOGENOM" id="CLU_038344_2_0_6"/>
<dbReference type="Proteomes" id="UP000002507">
    <property type="component" value="Chromosome"/>
</dbReference>
<dbReference type="GO" id="GO:0005737">
    <property type="term" value="C:cytoplasm"/>
    <property type="evidence" value="ECO:0007669"/>
    <property type="project" value="UniProtKB-SubCell"/>
</dbReference>
<dbReference type="GO" id="GO:0051537">
    <property type="term" value="F:2 iron, 2 sulfur cluster binding"/>
    <property type="evidence" value="ECO:0007669"/>
    <property type="project" value="UniProtKB-KW"/>
</dbReference>
<dbReference type="GO" id="GO:0050418">
    <property type="term" value="F:hydroxylamine reductase activity"/>
    <property type="evidence" value="ECO:0007669"/>
    <property type="project" value="UniProtKB-UniRule"/>
</dbReference>
<dbReference type="GO" id="GO:0046872">
    <property type="term" value="F:metal ion binding"/>
    <property type="evidence" value="ECO:0007669"/>
    <property type="project" value="UniProtKB-KW"/>
</dbReference>
<dbReference type="GO" id="GO:0004601">
    <property type="term" value="F:peroxidase activity"/>
    <property type="evidence" value="ECO:0007669"/>
    <property type="project" value="TreeGrafter"/>
</dbReference>
<dbReference type="GO" id="GO:0042542">
    <property type="term" value="P:response to hydrogen peroxide"/>
    <property type="evidence" value="ECO:0007669"/>
    <property type="project" value="TreeGrafter"/>
</dbReference>
<dbReference type="CDD" id="cd01914">
    <property type="entry name" value="HCP"/>
    <property type="match status" value="1"/>
</dbReference>
<dbReference type="FunFam" id="1.20.1270.20:FF:000001">
    <property type="entry name" value="Hydroxylamine reductase"/>
    <property type="match status" value="1"/>
</dbReference>
<dbReference type="FunFam" id="1.20.1270.20:FF:000002">
    <property type="entry name" value="Hydroxylamine reductase"/>
    <property type="match status" value="1"/>
</dbReference>
<dbReference type="FunFam" id="3.40.50.2030:FF:000001">
    <property type="entry name" value="Hydroxylamine reductase"/>
    <property type="match status" value="1"/>
</dbReference>
<dbReference type="FunFam" id="3.40.50.2030:FF:000002">
    <property type="entry name" value="Hydroxylamine reductase"/>
    <property type="match status" value="1"/>
</dbReference>
<dbReference type="Gene3D" id="1.20.1270.20">
    <property type="match status" value="2"/>
</dbReference>
<dbReference type="Gene3D" id="3.40.50.2030">
    <property type="match status" value="2"/>
</dbReference>
<dbReference type="HAMAP" id="MF_00069">
    <property type="entry name" value="Hydroxylam_reduct"/>
    <property type="match status" value="1"/>
</dbReference>
<dbReference type="InterPro" id="IPR004137">
    <property type="entry name" value="HCP/CODH"/>
</dbReference>
<dbReference type="InterPro" id="IPR010048">
    <property type="entry name" value="Hydroxylam_reduct"/>
</dbReference>
<dbReference type="InterPro" id="IPR016099">
    <property type="entry name" value="Prismane-like_a/b-sand"/>
</dbReference>
<dbReference type="InterPro" id="IPR011254">
    <property type="entry name" value="Prismane-like_sf"/>
</dbReference>
<dbReference type="InterPro" id="IPR016100">
    <property type="entry name" value="Prismane_a-bundle"/>
</dbReference>
<dbReference type="NCBIfam" id="TIGR01703">
    <property type="entry name" value="hybrid_clust"/>
    <property type="match status" value="1"/>
</dbReference>
<dbReference type="NCBIfam" id="NF003658">
    <property type="entry name" value="PRK05290.1"/>
    <property type="match status" value="1"/>
</dbReference>
<dbReference type="PANTHER" id="PTHR30109">
    <property type="entry name" value="HYDROXYLAMINE REDUCTASE"/>
    <property type="match status" value="1"/>
</dbReference>
<dbReference type="PANTHER" id="PTHR30109:SF0">
    <property type="entry name" value="HYDROXYLAMINE REDUCTASE"/>
    <property type="match status" value="1"/>
</dbReference>
<dbReference type="Pfam" id="PF03063">
    <property type="entry name" value="Prismane"/>
    <property type="match status" value="1"/>
</dbReference>
<dbReference type="PIRSF" id="PIRSF000076">
    <property type="entry name" value="HCP"/>
    <property type="match status" value="1"/>
</dbReference>
<dbReference type="SUPFAM" id="SSF56821">
    <property type="entry name" value="Prismane protein-like"/>
    <property type="match status" value="1"/>
</dbReference>
<reference key="1">
    <citation type="submission" date="2008-12" db="EMBL/GenBank/DDBJ databases">
        <title>Complete sequence of chromosome of Shewanella baltica OS223.</title>
        <authorList>
            <consortium name="US DOE Joint Genome Institute"/>
            <person name="Lucas S."/>
            <person name="Copeland A."/>
            <person name="Lapidus A."/>
            <person name="Glavina del Rio T."/>
            <person name="Dalin E."/>
            <person name="Tice H."/>
            <person name="Bruce D."/>
            <person name="Goodwin L."/>
            <person name="Pitluck S."/>
            <person name="Chertkov O."/>
            <person name="Meincke L."/>
            <person name="Brettin T."/>
            <person name="Detter J.C."/>
            <person name="Han C."/>
            <person name="Kuske C.R."/>
            <person name="Larimer F."/>
            <person name="Land M."/>
            <person name="Hauser L."/>
            <person name="Kyrpides N."/>
            <person name="Ovchinnikova G."/>
            <person name="Brettar I."/>
            <person name="Rodrigues J."/>
            <person name="Konstantinidis K."/>
            <person name="Tiedje J."/>
        </authorList>
    </citation>
    <scope>NUCLEOTIDE SEQUENCE [LARGE SCALE GENOMIC DNA]</scope>
    <source>
        <strain>OS223</strain>
    </source>
</reference>
<organism>
    <name type="scientific">Shewanella baltica (strain OS223)</name>
    <dbReference type="NCBI Taxonomy" id="407976"/>
    <lineage>
        <taxon>Bacteria</taxon>
        <taxon>Pseudomonadati</taxon>
        <taxon>Pseudomonadota</taxon>
        <taxon>Gammaproteobacteria</taxon>
        <taxon>Alteromonadales</taxon>
        <taxon>Shewanellaceae</taxon>
        <taxon>Shewanella</taxon>
    </lineage>
</organism>
<feature type="chain" id="PRO_1000118024" description="Hydroxylamine reductase">
    <location>
        <begin position="1"/>
        <end position="554"/>
    </location>
</feature>
<feature type="binding site" evidence="1">
    <location>
        <position position="3"/>
    </location>
    <ligand>
        <name>[2Fe-2S] cluster</name>
        <dbReference type="ChEBI" id="CHEBI:190135"/>
    </ligand>
</feature>
<feature type="binding site" evidence="1">
    <location>
        <position position="6"/>
    </location>
    <ligand>
        <name>[2Fe-2S] cluster</name>
        <dbReference type="ChEBI" id="CHEBI:190135"/>
    </ligand>
</feature>
<feature type="binding site" evidence="1">
    <location>
        <position position="18"/>
    </location>
    <ligand>
        <name>[2Fe-2S] cluster</name>
        <dbReference type="ChEBI" id="CHEBI:190135"/>
    </ligand>
</feature>
<feature type="binding site" evidence="1">
    <location>
        <position position="25"/>
    </location>
    <ligand>
        <name>[2Fe-2S] cluster</name>
        <dbReference type="ChEBI" id="CHEBI:190135"/>
    </ligand>
</feature>
<feature type="binding site" evidence="1">
    <location>
        <position position="252"/>
    </location>
    <ligand>
        <name>hybrid [4Fe-2O-2S] cluster</name>
        <dbReference type="ChEBI" id="CHEBI:60519"/>
    </ligand>
</feature>
<feature type="binding site" evidence="1">
    <location>
        <position position="276"/>
    </location>
    <ligand>
        <name>hybrid [4Fe-2O-2S] cluster</name>
        <dbReference type="ChEBI" id="CHEBI:60519"/>
    </ligand>
</feature>
<feature type="binding site" evidence="1">
    <location>
        <position position="320"/>
    </location>
    <ligand>
        <name>hybrid [4Fe-2O-2S] cluster</name>
        <dbReference type="ChEBI" id="CHEBI:60519"/>
    </ligand>
</feature>
<feature type="binding site" description="via persulfide group" evidence="1">
    <location>
        <position position="408"/>
    </location>
    <ligand>
        <name>hybrid [4Fe-2O-2S] cluster</name>
        <dbReference type="ChEBI" id="CHEBI:60519"/>
    </ligand>
</feature>
<feature type="binding site" evidence="1">
    <location>
        <position position="436"/>
    </location>
    <ligand>
        <name>hybrid [4Fe-2O-2S] cluster</name>
        <dbReference type="ChEBI" id="CHEBI:60519"/>
    </ligand>
</feature>
<feature type="binding site" evidence="1">
    <location>
        <position position="461"/>
    </location>
    <ligand>
        <name>hybrid [4Fe-2O-2S] cluster</name>
        <dbReference type="ChEBI" id="CHEBI:60519"/>
    </ligand>
</feature>
<feature type="binding site" evidence="1">
    <location>
        <position position="495"/>
    </location>
    <ligand>
        <name>hybrid [4Fe-2O-2S] cluster</name>
        <dbReference type="ChEBI" id="CHEBI:60519"/>
    </ligand>
</feature>
<feature type="binding site" evidence="1">
    <location>
        <position position="497"/>
    </location>
    <ligand>
        <name>hybrid [4Fe-2O-2S] cluster</name>
        <dbReference type="ChEBI" id="CHEBI:60519"/>
    </ligand>
</feature>
<feature type="modified residue" description="Cysteine persulfide" evidence="1">
    <location>
        <position position="408"/>
    </location>
</feature>
<evidence type="ECO:0000255" key="1">
    <source>
        <dbReference type="HAMAP-Rule" id="MF_00069"/>
    </source>
</evidence>